<keyword id="KW-0963">Cytoplasm</keyword>
<keyword id="KW-0251">Elongation factor</keyword>
<keyword id="KW-0342">GTP-binding</keyword>
<keyword id="KW-0547">Nucleotide-binding</keyword>
<keyword id="KW-0648">Protein biosynthesis</keyword>
<keyword id="KW-1185">Reference proteome</keyword>
<gene>
    <name evidence="1" type="primary">fusA</name>
    <name type="ordered locus">HPG27_1139</name>
</gene>
<protein>
    <recommendedName>
        <fullName evidence="1">Elongation factor G</fullName>
        <shortName evidence="1">EF-G</shortName>
    </recommendedName>
</protein>
<organism>
    <name type="scientific">Helicobacter pylori (strain G27)</name>
    <dbReference type="NCBI Taxonomy" id="563041"/>
    <lineage>
        <taxon>Bacteria</taxon>
        <taxon>Pseudomonadati</taxon>
        <taxon>Campylobacterota</taxon>
        <taxon>Epsilonproteobacteria</taxon>
        <taxon>Campylobacterales</taxon>
        <taxon>Helicobacteraceae</taxon>
        <taxon>Helicobacter</taxon>
    </lineage>
</organism>
<comment type="function">
    <text evidence="1">Catalyzes the GTP-dependent ribosomal translocation step during translation elongation. During this step, the ribosome changes from the pre-translocational (PRE) to the post-translocational (POST) state as the newly formed A-site-bound peptidyl-tRNA and P-site-bound deacylated tRNA move to the P and E sites, respectively. Catalyzes the coordinated movement of the two tRNA molecules, the mRNA and conformational changes in the ribosome.</text>
</comment>
<comment type="subcellular location">
    <subcellularLocation>
        <location evidence="1">Cytoplasm</location>
    </subcellularLocation>
</comment>
<comment type="similarity">
    <text evidence="1">Belongs to the TRAFAC class translation factor GTPase superfamily. Classic translation factor GTPase family. EF-G/EF-2 subfamily.</text>
</comment>
<name>EFG_HELPG</name>
<proteinExistence type="inferred from homology"/>
<reference key="1">
    <citation type="journal article" date="2009" name="J. Bacteriol.">
        <title>The complete genome sequence of Helicobacter pylori strain G27.</title>
        <authorList>
            <person name="Baltrus D.A."/>
            <person name="Amieva M.R."/>
            <person name="Covacci A."/>
            <person name="Lowe T.M."/>
            <person name="Merrell D.S."/>
            <person name="Ottemann K.M."/>
            <person name="Stein M."/>
            <person name="Salama N.R."/>
            <person name="Guillemin K."/>
        </authorList>
    </citation>
    <scope>NUCLEOTIDE SEQUENCE [LARGE SCALE GENOMIC DNA]</scope>
    <source>
        <strain>G27</strain>
    </source>
</reference>
<evidence type="ECO:0000255" key="1">
    <source>
        <dbReference type="HAMAP-Rule" id="MF_00054"/>
    </source>
</evidence>
<dbReference type="EMBL" id="CP001173">
    <property type="protein sequence ID" value="ACI27889.1"/>
    <property type="molecule type" value="Genomic_DNA"/>
</dbReference>
<dbReference type="RefSeq" id="WP_000101848.1">
    <property type="nucleotide sequence ID" value="NC_011333.1"/>
</dbReference>
<dbReference type="SMR" id="B5Z8J0"/>
<dbReference type="KEGG" id="hpg:HPG27_1139"/>
<dbReference type="HOGENOM" id="CLU_002794_4_1_7"/>
<dbReference type="Proteomes" id="UP000001735">
    <property type="component" value="Chromosome"/>
</dbReference>
<dbReference type="GO" id="GO:0005737">
    <property type="term" value="C:cytoplasm"/>
    <property type="evidence" value="ECO:0007669"/>
    <property type="project" value="UniProtKB-SubCell"/>
</dbReference>
<dbReference type="GO" id="GO:0005525">
    <property type="term" value="F:GTP binding"/>
    <property type="evidence" value="ECO:0007669"/>
    <property type="project" value="UniProtKB-UniRule"/>
</dbReference>
<dbReference type="GO" id="GO:0003924">
    <property type="term" value="F:GTPase activity"/>
    <property type="evidence" value="ECO:0007669"/>
    <property type="project" value="InterPro"/>
</dbReference>
<dbReference type="GO" id="GO:0003746">
    <property type="term" value="F:translation elongation factor activity"/>
    <property type="evidence" value="ECO:0007669"/>
    <property type="project" value="UniProtKB-UniRule"/>
</dbReference>
<dbReference type="GO" id="GO:0032790">
    <property type="term" value="P:ribosome disassembly"/>
    <property type="evidence" value="ECO:0007669"/>
    <property type="project" value="TreeGrafter"/>
</dbReference>
<dbReference type="CDD" id="cd01886">
    <property type="entry name" value="EF-G"/>
    <property type="match status" value="1"/>
</dbReference>
<dbReference type="CDD" id="cd16262">
    <property type="entry name" value="EFG_III"/>
    <property type="match status" value="1"/>
</dbReference>
<dbReference type="CDD" id="cd01434">
    <property type="entry name" value="EFG_mtEFG1_IV"/>
    <property type="match status" value="1"/>
</dbReference>
<dbReference type="CDD" id="cd03713">
    <property type="entry name" value="EFG_mtEFG_C"/>
    <property type="match status" value="1"/>
</dbReference>
<dbReference type="CDD" id="cd04088">
    <property type="entry name" value="EFG_mtEFG_II"/>
    <property type="match status" value="1"/>
</dbReference>
<dbReference type="FunFam" id="2.40.30.10:FF:000006">
    <property type="entry name" value="Elongation factor G"/>
    <property type="match status" value="1"/>
</dbReference>
<dbReference type="FunFam" id="3.30.230.10:FF:000003">
    <property type="entry name" value="Elongation factor G"/>
    <property type="match status" value="1"/>
</dbReference>
<dbReference type="FunFam" id="3.30.70.240:FF:000001">
    <property type="entry name" value="Elongation factor G"/>
    <property type="match status" value="1"/>
</dbReference>
<dbReference type="FunFam" id="3.30.70.870:FF:000001">
    <property type="entry name" value="Elongation factor G"/>
    <property type="match status" value="1"/>
</dbReference>
<dbReference type="FunFam" id="3.40.50.300:FF:000029">
    <property type="entry name" value="Elongation factor G"/>
    <property type="match status" value="1"/>
</dbReference>
<dbReference type="Gene3D" id="3.30.230.10">
    <property type="match status" value="1"/>
</dbReference>
<dbReference type="Gene3D" id="3.30.70.240">
    <property type="match status" value="1"/>
</dbReference>
<dbReference type="Gene3D" id="3.30.70.870">
    <property type="entry name" value="Elongation Factor G (Translational Gtpase), domain 3"/>
    <property type="match status" value="1"/>
</dbReference>
<dbReference type="Gene3D" id="3.40.50.300">
    <property type="entry name" value="P-loop containing nucleotide triphosphate hydrolases"/>
    <property type="match status" value="1"/>
</dbReference>
<dbReference type="Gene3D" id="2.40.30.10">
    <property type="entry name" value="Translation factors"/>
    <property type="match status" value="1"/>
</dbReference>
<dbReference type="HAMAP" id="MF_00054_B">
    <property type="entry name" value="EF_G_EF_2_B"/>
    <property type="match status" value="1"/>
</dbReference>
<dbReference type="InterPro" id="IPR041095">
    <property type="entry name" value="EFG_II"/>
</dbReference>
<dbReference type="InterPro" id="IPR009022">
    <property type="entry name" value="EFG_III"/>
</dbReference>
<dbReference type="InterPro" id="IPR035647">
    <property type="entry name" value="EFG_III/V"/>
</dbReference>
<dbReference type="InterPro" id="IPR047872">
    <property type="entry name" value="EFG_IV"/>
</dbReference>
<dbReference type="InterPro" id="IPR035649">
    <property type="entry name" value="EFG_V"/>
</dbReference>
<dbReference type="InterPro" id="IPR000640">
    <property type="entry name" value="EFG_V-like"/>
</dbReference>
<dbReference type="InterPro" id="IPR004161">
    <property type="entry name" value="EFTu-like_2"/>
</dbReference>
<dbReference type="InterPro" id="IPR031157">
    <property type="entry name" value="G_TR_CS"/>
</dbReference>
<dbReference type="InterPro" id="IPR027417">
    <property type="entry name" value="P-loop_NTPase"/>
</dbReference>
<dbReference type="InterPro" id="IPR020568">
    <property type="entry name" value="Ribosomal_Su5_D2-typ_SF"/>
</dbReference>
<dbReference type="InterPro" id="IPR014721">
    <property type="entry name" value="Ribsml_uS5_D2-typ_fold_subgr"/>
</dbReference>
<dbReference type="InterPro" id="IPR005225">
    <property type="entry name" value="Small_GTP-bd"/>
</dbReference>
<dbReference type="InterPro" id="IPR000795">
    <property type="entry name" value="T_Tr_GTP-bd_dom"/>
</dbReference>
<dbReference type="InterPro" id="IPR009000">
    <property type="entry name" value="Transl_B-barrel_sf"/>
</dbReference>
<dbReference type="InterPro" id="IPR004540">
    <property type="entry name" value="Transl_elong_EFG/EF2"/>
</dbReference>
<dbReference type="InterPro" id="IPR005517">
    <property type="entry name" value="Transl_elong_EFG/EF2_IV"/>
</dbReference>
<dbReference type="NCBIfam" id="TIGR00484">
    <property type="entry name" value="EF-G"/>
    <property type="match status" value="1"/>
</dbReference>
<dbReference type="NCBIfam" id="NF009379">
    <property type="entry name" value="PRK12740.1-3"/>
    <property type="match status" value="1"/>
</dbReference>
<dbReference type="NCBIfam" id="NF009381">
    <property type="entry name" value="PRK12740.1-5"/>
    <property type="match status" value="1"/>
</dbReference>
<dbReference type="NCBIfam" id="TIGR00231">
    <property type="entry name" value="small_GTP"/>
    <property type="match status" value="1"/>
</dbReference>
<dbReference type="PANTHER" id="PTHR43261:SF1">
    <property type="entry name" value="RIBOSOME-RELEASING FACTOR 2, MITOCHONDRIAL"/>
    <property type="match status" value="1"/>
</dbReference>
<dbReference type="PANTHER" id="PTHR43261">
    <property type="entry name" value="TRANSLATION ELONGATION FACTOR G-RELATED"/>
    <property type="match status" value="1"/>
</dbReference>
<dbReference type="Pfam" id="PF00679">
    <property type="entry name" value="EFG_C"/>
    <property type="match status" value="1"/>
</dbReference>
<dbReference type="Pfam" id="PF14492">
    <property type="entry name" value="EFG_III"/>
    <property type="match status" value="1"/>
</dbReference>
<dbReference type="Pfam" id="PF03764">
    <property type="entry name" value="EFG_IV"/>
    <property type="match status" value="1"/>
</dbReference>
<dbReference type="Pfam" id="PF00009">
    <property type="entry name" value="GTP_EFTU"/>
    <property type="match status" value="1"/>
</dbReference>
<dbReference type="Pfam" id="PF03144">
    <property type="entry name" value="GTP_EFTU_D2"/>
    <property type="match status" value="1"/>
</dbReference>
<dbReference type="PRINTS" id="PR00315">
    <property type="entry name" value="ELONGATNFCT"/>
</dbReference>
<dbReference type="SMART" id="SM00838">
    <property type="entry name" value="EFG_C"/>
    <property type="match status" value="1"/>
</dbReference>
<dbReference type="SMART" id="SM00889">
    <property type="entry name" value="EFG_IV"/>
    <property type="match status" value="1"/>
</dbReference>
<dbReference type="SUPFAM" id="SSF54980">
    <property type="entry name" value="EF-G C-terminal domain-like"/>
    <property type="match status" value="2"/>
</dbReference>
<dbReference type="SUPFAM" id="SSF52540">
    <property type="entry name" value="P-loop containing nucleoside triphosphate hydrolases"/>
    <property type="match status" value="1"/>
</dbReference>
<dbReference type="SUPFAM" id="SSF54211">
    <property type="entry name" value="Ribosomal protein S5 domain 2-like"/>
    <property type="match status" value="1"/>
</dbReference>
<dbReference type="SUPFAM" id="SSF50447">
    <property type="entry name" value="Translation proteins"/>
    <property type="match status" value="1"/>
</dbReference>
<dbReference type="PROSITE" id="PS00301">
    <property type="entry name" value="G_TR_1"/>
    <property type="match status" value="1"/>
</dbReference>
<dbReference type="PROSITE" id="PS51722">
    <property type="entry name" value="G_TR_2"/>
    <property type="match status" value="1"/>
</dbReference>
<sequence length="692" mass="77080">MARKTPLNRIRNIGIAAHIDAGKTTTSERILFYTGVSHKIGEVHDGAATMDWMEQEKERGITITSAATTCFWKDHQINLIDTPGHVDFTIEVERSMRVLDGAVSVFCSVGGVQPQSETVWRQANKYGVPRIVFVNKMDRIGANFYNVENQIKLRLKANPVPINIPIGTEDTFIGVIDLVQMKAIVWNNETMGAKYDVEEIPSDLLEKAKQYREKLVEAVAEQDEALMEKYLGGEELSVEEIKKGIKTGCLNMSLVPMLCGSSFKNKGVQTLLDAVIDYLPAPTEVVDIKGIDPKTEEEVFVKSSDDGEFAGLAFKIMTDPFVGQLTFVRVYRGKLESGSYVYNSTKDKKERVGRLLKMHSNKREDIKEVYAGEICAFVGLKDTLTGDTLCDEKNAIVLERMEFPEPVIHIAVEPKTKADQEKMGVALGKLAEEDPSFRVMTQEETGQTLIGGMGELHLEIIVDRLKREFKVEAEIGQPQVAFRETIRSSVSKEHKYAKQSGGRGQYGHVFIKLEPKEPGSGYEFVNEISGGVIPKEYIPAVDKGIQEAMQNGVLAGYPVVDFKVTLYDGSYHDVDSSEMAFKIAGSMAFKEASRAANPVLLEPMMKVEVEVPEEYMGDVIGDLNRRRGQINSMDDRLGLKIVNAFVPLVEMFGYSTDLRSATQGRGTYSMEFDHYGEVPSNIAKEIVEKRKG</sequence>
<accession>B5Z8J0</accession>
<feature type="chain" id="PRO_1000091720" description="Elongation factor G">
    <location>
        <begin position="1"/>
        <end position="692"/>
    </location>
</feature>
<feature type="domain" description="tr-type G">
    <location>
        <begin position="8"/>
        <end position="283"/>
    </location>
</feature>
<feature type="binding site" evidence="1">
    <location>
        <begin position="17"/>
        <end position="24"/>
    </location>
    <ligand>
        <name>GTP</name>
        <dbReference type="ChEBI" id="CHEBI:37565"/>
    </ligand>
</feature>
<feature type="binding site" evidence="1">
    <location>
        <begin position="81"/>
        <end position="85"/>
    </location>
    <ligand>
        <name>GTP</name>
        <dbReference type="ChEBI" id="CHEBI:37565"/>
    </ligand>
</feature>
<feature type="binding site" evidence="1">
    <location>
        <begin position="135"/>
        <end position="138"/>
    </location>
    <ligand>
        <name>GTP</name>
        <dbReference type="ChEBI" id="CHEBI:37565"/>
    </ligand>
</feature>